<comment type="similarity">
    <text evidence="1">Belongs to the UPF0306 family.</text>
</comment>
<comment type="sequence caution" evidence="2">
    <conflict type="erroneous initiation">
        <sequence resource="EMBL-CDS" id="AAM84305"/>
    </conflict>
</comment>
<comment type="sequence caution" evidence="2">
    <conflict type="erroneous initiation">
        <sequence resource="EMBL-CDS" id="AAS60885"/>
    </conflict>
</comment>
<feature type="chain" id="PRO_0000214875" description="UPF0306 protein YPO3467/y0717/YP_0616">
    <location>
        <begin position="1"/>
        <end position="147"/>
    </location>
</feature>
<organism>
    <name type="scientific">Yersinia pestis</name>
    <dbReference type="NCBI Taxonomy" id="632"/>
    <lineage>
        <taxon>Bacteria</taxon>
        <taxon>Pseudomonadati</taxon>
        <taxon>Pseudomonadota</taxon>
        <taxon>Gammaproteobacteria</taxon>
        <taxon>Enterobacterales</taxon>
        <taxon>Yersiniaceae</taxon>
        <taxon>Yersinia</taxon>
    </lineage>
</organism>
<accession>Q8ZBE9</accession>
<accession>Q0WBI2</accession>
<accession>Q8D1C7</accession>
<name>Y3467_YERPE</name>
<protein>
    <recommendedName>
        <fullName evidence="1">UPF0306 protein YPO3467/y0717/YP_0616</fullName>
    </recommendedName>
</protein>
<dbReference type="EMBL" id="AL590842">
    <property type="protein sequence ID" value="CAL22055.1"/>
    <property type="molecule type" value="Genomic_DNA"/>
</dbReference>
<dbReference type="EMBL" id="AE009952">
    <property type="protein sequence ID" value="AAM84305.1"/>
    <property type="status" value="ALT_INIT"/>
    <property type="molecule type" value="Genomic_DNA"/>
</dbReference>
<dbReference type="EMBL" id="AE017042">
    <property type="protein sequence ID" value="AAS60885.1"/>
    <property type="status" value="ALT_INIT"/>
    <property type="molecule type" value="Genomic_DNA"/>
</dbReference>
<dbReference type="PIR" id="AD0421">
    <property type="entry name" value="AD0421"/>
</dbReference>
<dbReference type="RefSeq" id="WP_002209282.1">
    <property type="nucleotide sequence ID" value="NZ_WUCM01000023.1"/>
</dbReference>
<dbReference type="RefSeq" id="YP_002348356.1">
    <property type="nucleotide sequence ID" value="NC_003143.1"/>
</dbReference>
<dbReference type="SMR" id="Q8ZBE9"/>
<dbReference type="STRING" id="214092.YPO3467"/>
<dbReference type="PaxDb" id="214092-YPO3467"/>
<dbReference type="DNASU" id="1145664"/>
<dbReference type="EnsemblBacteria" id="AAS60885">
    <property type="protein sequence ID" value="AAS60885"/>
    <property type="gene ID" value="YP_0616"/>
</dbReference>
<dbReference type="KEGG" id="ype:YPO3467"/>
<dbReference type="KEGG" id="ypk:y0717"/>
<dbReference type="KEGG" id="ypm:YP_0616"/>
<dbReference type="PATRIC" id="fig|214092.21.peg.3961"/>
<dbReference type="eggNOG" id="COG3787">
    <property type="taxonomic scope" value="Bacteria"/>
</dbReference>
<dbReference type="HOGENOM" id="CLU_105087_3_0_6"/>
<dbReference type="OMA" id="DLWCANC"/>
<dbReference type="OrthoDB" id="8447155at2"/>
<dbReference type="Proteomes" id="UP000000815">
    <property type="component" value="Chromosome"/>
</dbReference>
<dbReference type="Proteomes" id="UP000001019">
    <property type="component" value="Chromosome"/>
</dbReference>
<dbReference type="Proteomes" id="UP000002490">
    <property type="component" value="Chromosome"/>
</dbReference>
<dbReference type="Gene3D" id="2.30.110.10">
    <property type="entry name" value="Electron Transport, Fmn-binding Protein, Chain A"/>
    <property type="match status" value="1"/>
</dbReference>
<dbReference type="HAMAP" id="MF_00764">
    <property type="entry name" value="UPF0306"/>
    <property type="match status" value="1"/>
</dbReference>
<dbReference type="InterPro" id="IPR012349">
    <property type="entry name" value="Split_barrel_FMN-bd"/>
</dbReference>
<dbReference type="InterPro" id="IPR011194">
    <property type="entry name" value="UPF0306"/>
</dbReference>
<dbReference type="NCBIfam" id="NF002900">
    <property type="entry name" value="PRK03467.1"/>
    <property type="match status" value="1"/>
</dbReference>
<dbReference type="PIRSF" id="PIRSF009554">
    <property type="entry name" value="UCP009554"/>
    <property type="match status" value="1"/>
</dbReference>
<dbReference type="SUPFAM" id="SSF50475">
    <property type="entry name" value="FMN-binding split barrel"/>
    <property type="match status" value="1"/>
</dbReference>
<keyword id="KW-1185">Reference proteome</keyword>
<reference key="1">
    <citation type="journal article" date="2001" name="Nature">
        <title>Genome sequence of Yersinia pestis, the causative agent of plague.</title>
        <authorList>
            <person name="Parkhill J."/>
            <person name="Wren B.W."/>
            <person name="Thomson N.R."/>
            <person name="Titball R.W."/>
            <person name="Holden M.T.G."/>
            <person name="Prentice M.B."/>
            <person name="Sebaihia M."/>
            <person name="James K.D."/>
            <person name="Churcher C.M."/>
            <person name="Mungall K.L."/>
            <person name="Baker S."/>
            <person name="Basham D."/>
            <person name="Bentley S.D."/>
            <person name="Brooks K."/>
            <person name="Cerdeno-Tarraga A.-M."/>
            <person name="Chillingworth T."/>
            <person name="Cronin A."/>
            <person name="Davies R.M."/>
            <person name="Davis P."/>
            <person name="Dougan G."/>
            <person name="Feltwell T."/>
            <person name="Hamlin N."/>
            <person name="Holroyd S."/>
            <person name="Jagels K."/>
            <person name="Karlyshev A.V."/>
            <person name="Leather S."/>
            <person name="Moule S."/>
            <person name="Oyston P.C.F."/>
            <person name="Quail M.A."/>
            <person name="Rutherford K.M."/>
            <person name="Simmonds M."/>
            <person name="Skelton J."/>
            <person name="Stevens K."/>
            <person name="Whitehead S."/>
            <person name="Barrell B.G."/>
        </authorList>
    </citation>
    <scope>NUCLEOTIDE SEQUENCE [LARGE SCALE GENOMIC DNA]</scope>
    <source>
        <strain>CO-92 / Biovar Orientalis</strain>
    </source>
</reference>
<reference key="2">
    <citation type="journal article" date="2002" name="J. Bacteriol.">
        <title>Genome sequence of Yersinia pestis KIM.</title>
        <authorList>
            <person name="Deng W."/>
            <person name="Burland V."/>
            <person name="Plunkett G. III"/>
            <person name="Boutin A."/>
            <person name="Mayhew G.F."/>
            <person name="Liss P."/>
            <person name="Perna N.T."/>
            <person name="Rose D.J."/>
            <person name="Mau B."/>
            <person name="Zhou S."/>
            <person name="Schwartz D.C."/>
            <person name="Fetherston J.D."/>
            <person name="Lindler L.E."/>
            <person name="Brubaker R.R."/>
            <person name="Plano G.V."/>
            <person name="Straley S.C."/>
            <person name="McDonough K.A."/>
            <person name="Nilles M.L."/>
            <person name="Matson J.S."/>
            <person name="Blattner F.R."/>
            <person name="Perry R.D."/>
        </authorList>
    </citation>
    <scope>NUCLEOTIDE SEQUENCE [LARGE SCALE GENOMIC DNA]</scope>
    <source>
        <strain>KIM10+ / Biovar Mediaevalis</strain>
    </source>
</reference>
<reference key="3">
    <citation type="journal article" date="2004" name="DNA Res.">
        <title>Complete genome sequence of Yersinia pestis strain 91001, an isolate avirulent to humans.</title>
        <authorList>
            <person name="Song Y."/>
            <person name="Tong Z."/>
            <person name="Wang J."/>
            <person name="Wang L."/>
            <person name="Guo Z."/>
            <person name="Han Y."/>
            <person name="Zhang J."/>
            <person name="Pei D."/>
            <person name="Zhou D."/>
            <person name="Qin H."/>
            <person name="Pang X."/>
            <person name="Han Y."/>
            <person name="Zhai J."/>
            <person name="Li M."/>
            <person name="Cui B."/>
            <person name="Qi Z."/>
            <person name="Jin L."/>
            <person name="Dai R."/>
            <person name="Chen F."/>
            <person name="Li S."/>
            <person name="Ye C."/>
            <person name="Du Z."/>
            <person name="Lin W."/>
            <person name="Wang J."/>
            <person name="Yu J."/>
            <person name="Yang H."/>
            <person name="Wang J."/>
            <person name="Huang P."/>
            <person name="Yang R."/>
        </authorList>
    </citation>
    <scope>NUCLEOTIDE SEQUENCE [LARGE SCALE GENOMIC DNA]</scope>
    <source>
        <strain>91001 / Biovar Mediaevalis</strain>
    </source>
</reference>
<proteinExistence type="inferred from homology"/>
<sequence length="147" mass="16712">MNNPDDVLLINRFLRQQHVLTLCAGSGMDMWCASCFYVFDENQMALFLMTEKHTRHSELMLINPQVAGTVATQSRTIALIKGIQYRGEISLLSGDAEQAARNRYCRRFPVAKVSSAPLWQLNLLEIKMTNNALGFGKKLHWSRVEPL</sequence>
<evidence type="ECO:0000255" key="1">
    <source>
        <dbReference type="HAMAP-Rule" id="MF_00764"/>
    </source>
</evidence>
<evidence type="ECO:0000305" key="2"/>
<gene>
    <name type="ordered locus">YPO3467</name>
    <name type="ordered locus">y0717</name>
    <name type="ordered locus">YP_0616</name>
</gene>